<protein>
    <recommendedName>
        <fullName evidence="1">Phosphatidylglycerol--prolipoprotein diacylglyceryl transferase</fullName>
        <ecNumber evidence="1">2.5.1.145</ecNumber>
    </recommendedName>
</protein>
<keyword id="KW-1003">Cell membrane</keyword>
<keyword id="KW-0472">Membrane</keyword>
<keyword id="KW-0808">Transferase</keyword>
<keyword id="KW-0812">Transmembrane</keyword>
<keyword id="KW-1133">Transmembrane helix</keyword>
<proteinExistence type="inferred from homology"/>
<comment type="function">
    <text evidence="1">Catalyzes the transfer of the diacylglyceryl group from phosphatidylglycerol to the sulfhydryl group of the N-terminal cysteine of a prolipoprotein, the first step in the formation of mature lipoproteins.</text>
</comment>
<comment type="catalytic activity">
    <reaction evidence="1">
        <text>L-cysteinyl-[prolipoprotein] + a 1,2-diacyl-sn-glycero-3-phospho-(1'-sn-glycerol) = an S-1,2-diacyl-sn-glyceryl-L-cysteinyl-[prolipoprotein] + sn-glycerol 1-phosphate + H(+)</text>
        <dbReference type="Rhea" id="RHEA:56712"/>
        <dbReference type="Rhea" id="RHEA-COMP:14679"/>
        <dbReference type="Rhea" id="RHEA-COMP:14680"/>
        <dbReference type="ChEBI" id="CHEBI:15378"/>
        <dbReference type="ChEBI" id="CHEBI:29950"/>
        <dbReference type="ChEBI" id="CHEBI:57685"/>
        <dbReference type="ChEBI" id="CHEBI:64716"/>
        <dbReference type="ChEBI" id="CHEBI:140658"/>
        <dbReference type="EC" id="2.5.1.145"/>
    </reaction>
</comment>
<comment type="pathway">
    <text evidence="1">Protein modification; lipoprotein biosynthesis (diacylglyceryl transfer).</text>
</comment>
<comment type="subcellular location">
    <subcellularLocation>
        <location evidence="1">Cell membrane</location>
        <topology evidence="1">Multi-pass membrane protein</topology>
    </subcellularLocation>
</comment>
<comment type="similarity">
    <text evidence="1">Belongs to the Lgt family.</text>
</comment>
<reference key="1">
    <citation type="submission" date="2007-05" db="EMBL/GenBank/DDBJ databases">
        <title>Complete sequence of chromosome of Staphylococcus aureus subsp. aureus JH9.</title>
        <authorList>
            <consortium name="US DOE Joint Genome Institute"/>
            <person name="Copeland A."/>
            <person name="Lucas S."/>
            <person name="Lapidus A."/>
            <person name="Barry K."/>
            <person name="Detter J.C."/>
            <person name="Glavina del Rio T."/>
            <person name="Hammon N."/>
            <person name="Israni S."/>
            <person name="Pitluck S."/>
            <person name="Chain P."/>
            <person name="Malfatti S."/>
            <person name="Shin M."/>
            <person name="Vergez L."/>
            <person name="Schmutz J."/>
            <person name="Larimer F."/>
            <person name="Land M."/>
            <person name="Hauser L."/>
            <person name="Kyrpides N."/>
            <person name="Kim E."/>
            <person name="Tomasz A."/>
            <person name="Richardson P."/>
        </authorList>
    </citation>
    <scope>NUCLEOTIDE SEQUENCE [LARGE SCALE GENOMIC DNA]</scope>
    <source>
        <strain>JH9</strain>
    </source>
</reference>
<gene>
    <name evidence="1" type="primary">lgt</name>
    <name type="ordered locus">SaurJH9_0785</name>
</gene>
<accession>A5IQW5</accession>
<dbReference type="EC" id="2.5.1.145" evidence="1"/>
<dbReference type="EMBL" id="CP000703">
    <property type="protein sequence ID" value="ABQ48588.1"/>
    <property type="molecule type" value="Genomic_DNA"/>
</dbReference>
<dbReference type="RefSeq" id="WP_000513305.1">
    <property type="nucleotide sequence ID" value="NC_009487.1"/>
</dbReference>
<dbReference type="SMR" id="A5IQW5"/>
<dbReference type="KEGG" id="saj:SaurJH9_0785"/>
<dbReference type="HOGENOM" id="CLU_013386_0_1_9"/>
<dbReference type="UniPathway" id="UPA00664"/>
<dbReference type="GO" id="GO:0005886">
    <property type="term" value="C:plasma membrane"/>
    <property type="evidence" value="ECO:0007669"/>
    <property type="project" value="UniProtKB-SubCell"/>
</dbReference>
<dbReference type="GO" id="GO:0008961">
    <property type="term" value="F:phosphatidylglycerol-prolipoprotein diacylglyceryl transferase activity"/>
    <property type="evidence" value="ECO:0007669"/>
    <property type="project" value="UniProtKB-UniRule"/>
</dbReference>
<dbReference type="GO" id="GO:0042158">
    <property type="term" value="P:lipoprotein biosynthetic process"/>
    <property type="evidence" value="ECO:0007669"/>
    <property type="project" value="UniProtKB-UniRule"/>
</dbReference>
<dbReference type="HAMAP" id="MF_01147">
    <property type="entry name" value="Lgt"/>
    <property type="match status" value="1"/>
</dbReference>
<dbReference type="InterPro" id="IPR001640">
    <property type="entry name" value="Lgt"/>
</dbReference>
<dbReference type="NCBIfam" id="TIGR00544">
    <property type="entry name" value="lgt"/>
    <property type="match status" value="1"/>
</dbReference>
<dbReference type="PANTHER" id="PTHR30589:SF0">
    <property type="entry name" value="PHOSPHATIDYLGLYCEROL--PROLIPOPROTEIN DIACYLGLYCERYL TRANSFERASE"/>
    <property type="match status" value="1"/>
</dbReference>
<dbReference type="PANTHER" id="PTHR30589">
    <property type="entry name" value="PROLIPOPROTEIN DIACYLGLYCERYL TRANSFERASE"/>
    <property type="match status" value="1"/>
</dbReference>
<dbReference type="Pfam" id="PF01790">
    <property type="entry name" value="LGT"/>
    <property type="match status" value="1"/>
</dbReference>
<dbReference type="PROSITE" id="PS01311">
    <property type="entry name" value="LGT"/>
    <property type="match status" value="1"/>
</dbReference>
<feature type="chain" id="PRO_1000085086" description="Phosphatidylglycerol--prolipoprotein diacylglyceryl transferase">
    <location>
        <begin position="1"/>
        <end position="279"/>
    </location>
</feature>
<feature type="transmembrane region" description="Helical" evidence="1">
    <location>
        <begin position="18"/>
        <end position="38"/>
    </location>
</feature>
<feature type="transmembrane region" description="Helical" evidence="1">
    <location>
        <begin position="55"/>
        <end position="75"/>
    </location>
</feature>
<feature type="transmembrane region" description="Helical" evidence="1">
    <location>
        <begin position="89"/>
        <end position="109"/>
    </location>
</feature>
<feature type="transmembrane region" description="Helical" evidence="1">
    <location>
        <begin position="203"/>
        <end position="223"/>
    </location>
</feature>
<feature type="transmembrane region" description="Helical" evidence="1">
    <location>
        <begin position="235"/>
        <end position="255"/>
    </location>
</feature>
<feature type="binding site" evidence="1">
    <location>
        <position position="137"/>
    </location>
    <ligand>
        <name>a 1,2-diacyl-sn-glycero-3-phospho-(1'-sn-glycerol)</name>
        <dbReference type="ChEBI" id="CHEBI:64716"/>
    </ligand>
</feature>
<sequence length="279" mass="31582">MGIVFNYIDPVAFNLGPLSVRWYGIIIAVGILLGYFVAQRALVKAGLHKDTLVDIIFYSALFGFIAARIYFVIFQWPYYAENPSEIIKIWHGGIAIHGGLIGGFIAGVIVCKVKNLNPFQIGDIVAPSIILAQGIGRWGNFMNHEAHGGPVSRAFLEQLHLPNFIIENMYINGQYYHPTFLYESIWDVAGFIILVNIRKHLKLGETFFLYLTWYSIGRFFIEGLRTDSLMLTSNIRVAQLVSILLILISISLIVYRRIKYNPPLYSKVGALPWPTKKVK</sequence>
<name>LGT_STAA9</name>
<organism>
    <name type="scientific">Staphylococcus aureus (strain JH9)</name>
    <dbReference type="NCBI Taxonomy" id="359786"/>
    <lineage>
        <taxon>Bacteria</taxon>
        <taxon>Bacillati</taxon>
        <taxon>Bacillota</taxon>
        <taxon>Bacilli</taxon>
        <taxon>Bacillales</taxon>
        <taxon>Staphylococcaceae</taxon>
        <taxon>Staphylococcus</taxon>
    </lineage>
</organism>
<evidence type="ECO:0000255" key="1">
    <source>
        <dbReference type="HAMAP-Rule" id="MF_01147"/>
    </source>
</evidence>